<geneLocation type="chloroplast"/>
<accession>Q9GF93</accession>
<sequence>METATLVTIFISGLLVSFTGYALYIAFGQPSQQLRDPFEEHGD</sequence>
<reference key="1">
    <citation type="journal article" date="2000" name="Am. J. Bot.">
        <title>Utility of 17 chloroplast genes for inferring the phylogeny of the basal angiosperms.</title>
        <authorList>
            <person name="Graham S.W."/>
            <person name="Olmstead R.G."/>
        </authorList>
    </citation>
    <scope>NUCLEOTIDE SEQUENCE [GENOMIC DNA]</scope>
</reference>
<keyword id="KW-0150">Chloroplast</keyword>
<keyword id="KW-0472">Membrane</keyword>
<keyword id="KW-0934">Plastid</keyword>
<keyword id="KW-0793">Thylakoid</keyword>
<keyword id="KW-0812">Transmembrane</keyword>
<keyword id="KW-1133">Transmembrane helix</keyword>
<organism>
    <name type="scientific">Dioscorea bulbifera</name>
    <name type="common">Air potato</name>
    <name type="synonym">Dioscorea latifolia</name>
    <dbReference type="NCBI Taxonomy" id="35874"/>
    <lineage>
        <taxon>Eukaryota</taxon>
        <taxon>Viridiplantae</taxon>
        <taxon>Streptophyta</taxon>
        <taxon>Embryophyta</taxon>
        <taxon>Tracheophyta</taxon>
        <taxon>Spermatophyta</taxon>
        <taxon>Magnoliopsida</taxon>
        <taxon>Liliopsida</taxon>
        <taxon>Dioscoreales</taxon>
        <taxon>Dioscoreaceae</taxon>
        <taxon>Dioscorea</taxon>
    </lineage>
</organism>
<feature type="chain" id="PRO_0000207895" description="Protein PsbN">
    <location>
        <begin position="1"/>
        <end position="43"/>
    </location>
</feature>
<feature type="transmembrane region" description="Helical" evidence="1">
    <location>
        <begin position="7"/>
        <end position="27"/>
    </location>
</feature>
<evidence type="ECO:0000255" key="1">
    <source>
        <dbReference type="HAMAP-Rule" id="MF_00293"/>
    </source>
</evidence>
<gene>
    <name evidence="1" type="primary">psbN</name>
</gene>
<protein>
    <recommendedName>
        <fullName evidence="1">Protein PsbN</fullName>
    </recommendedName>
</protein>
<name>PSBN_DIOBU</name>
<dbReference type="EMBL" id="AF123849">
    <property type="protein sequence ID" value="AAG26275.1"/>
    <property type="molecule type" value="Genomic_DNA"/>
</dbReference>
<dbReference type="RefSeq" id="YP_009528914.1">
    <property type="nucleotide sequence ID" value="NC_039708.1"/>
</dbReference>
<dbReference type="SMR" id="Q9GF93"/>
<dbReference type="GeneID" id="38328477"/>
<dbReference type="GO" id="GO:0009535">
    <property type="term" value="C:chloroplast thylakoid membrane"/>
    <property type="evidence" value="ECO:0007669"/>
    <property type="project" value="UniProtKB-SubCell"/>
</dbReference>
<dbReference type="GO" id="GO:0015979">
    <property type="term" value="P:photosynthesis"/>
    <property type="evidence" value="ECO:0007669"/>
    <property type="project" value="InterPro"/>
</dbReference>
<dbReference type="HAMAP" id="MF_00293">
    <property type="entry name" value="PSII_PsbN"/>
    <property type="match status" value="1"/>
</dbReference>
<dbReference type="InterPro" id="IPR003398">
    <property type="entry name" value="PSII_PsbN"/>
</dbReference>
<dbReference type="PANTHER" id="PTHR35326">
    <property type="entry name" value="PROTEIN PSBN"/>
    <property type="match status" value="1"/>
</dbReference>
<dbReference type="PANTHER" id="PTHR35326:SF3">
    <property type="entry name" value="PROTEIN PSBN"/>
    <property type="match status" value="1"/>
</dbReference>
<dbReference type="Pfam" id="PF02468">
    <property type="entry name" value="PsbN"/>
    <property type="match status" value="1"/>
</dbReference>
<proteinExistence type="inferred from homology"/>
<comment type="function">
    <text evidence="1">May play a role in photosystem I and II biogenesis.</text>
</comment>
<comment type="subcellular location">
    <subcellularLocation>
        <location evidence="1">Plastid</location>
        <location evidence="1">Chloroplast thylakoid membrane</location>
        <topology evidence="1">Single-pass membrane protein</topology>
    </subcellularLocation>
</comment>
<comment type="similarity">
    <text evidence="1">Belongs to the PsbN family.</text>
</comment>
<comment type="caution">
    <text evidence="1">Originally thought to be a component of PSII; based on experiments in Synechocystis, N.tabacum and barley, and its absence from PSII in T.elongatus and T.vulcanus, this is probably not true.</text>
</comment>